<proteinExistence type="inferred from homology"/>
<comment type="function">
    <text evidence="1">Catalyzes 2 different reactions between oxygen and the acireductone 1,2-dihydroxy-3-keto-5-methylthiopentene (DHK-MTPene) depending upon the metal bound in the active site. Fe-containing acireductone dioxygenase (Fe-ARD) produces formate and 2-keto-4-methylthiobutyrate (KMTB), the alpha-ketoacid precursor of methionine in the methionine recycle pathway. Ni-containing acireductone dioxygenase (Ni-ARD) produces methylthiopropionate, carbon monoxide and formate, and does not lie on the methionine recycle pathway.</text>
</comment>
<comment type="catalytic activity">
    <reaction evidence="1">
        <text>1,2-dihydroxy-5-(methylsulfanyl)pent-1-en-3-one + O2 = 3-(methylsulfanyl)propanoate + CO + formate + 2 H(+)</text>
        <dbReference type="Rhea" id="RHEA:14161"/>
        <dbReference type="ChEBI" id="CHEBI:15378"/>
        <dbReference type="ChEBI" id="CHEBI:15379"/>
        <dbReference type="ChEBI" id="CHEBI:15740"/>
        <dbReference type="ChEBI" id="CHEBI:17245"/>
        <dbReference type="ChEBI" id="CHEBI:49016"/>
        <dbReference type="ChEBI" id="CHEBI:49252"/>
        <dbReference type="EC" id="1.13.11.53"/>
    </reaction>
</comment>
<comment type="catalytic activity">
    <reaction evidence="1">
        <text>1,2-dihydroxy-5-(methylsulfanyl)pent-1-en-3-one + O2 = 4-methylsulfanyl-2-oxobutanoate + formate + 2 H(+)</text>
        <dbReference type="Rhea" id="RHEA:24504"/>
        <dbReference type="ChEBI" id="CHEBI:15378"/>
        <dbReference type="ChEBI" id="CHEBI:15379"/>
        <dbReference type="ChEBI" id="CHEBI:15740"/>
        <dbReference type="ChEBI" id="CHEBI:16723"/>
        <dbReference type="ChEBI" id="CHEBI:49252"/>
        <dbReference type="EC" id="1.13.11.54"/>
    </reaction>
</comment>
<comment type="cofactor">
    <cofactor evidence="1">
        <name>Fe(2+)</name>
        <dbReference type="ChEBI" id="CHEBI:29033"/>
    </cofactor>
    <text evidence="1">Binds 1 Fe(2+) cation per monomer.</text>
</comment>
<comment type="cofactor">
    <cofactor evidence="1">
        <name>Ni(2+)</name>
        <dbReference type="ChEBI" id="CHEBI:49786"/>
    </cofactor>
    <text evidence="1">Binds 1 nickel ion per monomer.</text>
</comment>
<comment type="pathway">
    <text evidence="1">Amino-acid biosynthesis; L-methionine biosynthesis via salvage pathway; L-methionine from S-methyl-5-thio-alpha-D-ribose 1-phosphate: step 5/6.</text>
</comment>
<comment type="subunit">
    <text evidence="1">Monomer.</text>
</comment>
<comment type="similarity">
    <text evidence="1">Belongs to the acireductone dioxygenase (ARD) family.</text>
</comment>
<organism>
    <name type="scientific">Bacillus pumilus (strain SAFR-032)</name>
    <dbReference type="NCBI Taxonomy" id="315750"/>
    <lineage>
        <taxon>Bacteria</taxon>
        <taxon>Bacillati</taxon>
        <taxon>Bacillota</taxon>
        <taxon>Bacilli</taxon>
        <taxon>Bacillales</taxon>
        <taxon>Bacillaceae</taxon>
        <taxon>Bacillus</taxon>
    </lineage>
</organism>
<gene>
    <name evidence="1" type="primary">mtnD</name>
    <name type="ordered locus">BPUM_1255</name>
</gene>
<dbReference type="EC" id="1.13.11.54" evidence="1"/>
<dbReference type="EC" id="1.13.11.53" evidence="1"/>
<dbReference type="EMBL" id="CP000813">
    <property type="protein sequence ID" value="ABV61938.1"/>
    <property type="molecule type" value="Genomic_DNA"/>
</dbReference>
<dbReference type="RefSeq" id="WP_012009738.1">
    <property type="nucleotide sequence ID" value="NZ_VEIS01000019.1"/>
</dbReference>
<dbReference type="SMR" id="A8FCH1"/>
<dbReference type="STRING" id="315750.BPUM_1255"/>
<dbReference type="GeneID" id="5620518"/>
<dbReference type="KEGG" id="bpu:BPUM_1255"/>
<dbReference type="eggNOG" id="COG1791">
    <property type="taxonomic scope" value="Bacteria"/>
</dbReference>
<dbReference type="HOGENOM" id="CLU_125400_0_0_9"/>
<dbReference type="OrthoDB" id="9795636at2"/>
<dbReference type="UniPathway" id="UPA00904">
    <property type="reaction ID" value="UER00878"/>
</dbReference>
<dbReference type="Proteomes" id="UP000001355">
    <property type="component" value="Chromosome"/>
</dbReference>
<dbReference type="GO" id="GO:0010308">
    <property type="term" value="F:acireductone dioxygenase (Ni2+-requiring) activity"/>
    <property type="evidence" value="ECO:0007669"/>
    <property type="project" value="UniProtKB-UniRule"/>
</dbReference>
<dbReference type="GO" id="GO:0010309">
    <property type="term" value="F:acireductone dioxygenase [iron(II)-requiring] activity"/>
    <property type="evidence" value="ECO:0007669"/>
    <property type="project" value="UniProtKB-UniRule"/>
</dbReference>
<dbReference type="GO" id="GO:0005506">
    <property type="term" value="F:iron ion binding"/>
    <property type="evidence" value="ECO:0007669"/>
    <property type="project" value="UniProtKB-UniRule"/>
</dbReference>
<dbReference type="GO" id="GO:0016151">
    <property type="term" value="F:nickel cation binding"/>
    <property type="evidence" value="ECO:0007669"/>
    <property type="project" value="UniProtKB-UniRule"/>
</dbReference>
<dbReference type="GO" id="GO:0019509">
    <property type="term" value="P:L-methionine salvage from methylthioadenosine"/>
    <property type="evidence" value="ECO:0007669"/>
    <property type="project" value="UniProtKB-UniRule"/>
</dbReference>
<dbReference type="GO" id="GO:0019284">
    <property type="term" value="P:L-methionine salvage from S-adenosylmethionine"/>
    <property type="evidence" value="ECO:0007669"/>
    <property type="project" value="InterPro"/>
</dbReference>
<dbReference type="CDD" id="cd02232">
    <property type="entry name" value="cupin_ARD"/>
    <property type="match status" value="1"/>
</dbReference>
<dbReference type="FunFam" id="2.60.120.10:FF:000056">
    <property type="entry name" value="Acireductone dioxygenase"/>
    <property type="match status" value="1"/>
</dbReference>
<dbReference type="Gene3D" id="2.60.120.10">
    <property type="entry name" value="Jelly Rolls"/>
    <property type="match status" value="1"/>
</dbReference>
<dbReference type="HAMAP" id="MF_01682">
    <property type="entry name" value="Salvage_MtnD"/>
    <property type="match status" value="1"/>
</dbReference>
<dbReference type="InterPro" id="IPR004313">
    <property type="entry name" value="ARD"/>
</dbReference>
<dbReference type="InterPro" id="IPR023956">
    <property type="entry name" value="ARD_bac"/>
</dbReference>
<dbReference type="InterPro" id="IPR014710">
    <property type="entry name" value="RmlC-like_jellyroll"/>
</dbReference>
<dbReference type="InterPro" id="IPR011051">
    <property type="entry name" value="RmlC_Cupin_sf"/>
</dbReference>
<dbReference type="PANTHER" id="PTHR23418">
    <property type="entry name" value="ACIREDUCTONE DIOXYGENASE"/>
    <property type="match status" value="1"/>
</dbReference>
<dbReference type="PANTHER" id="PTHR23418:SF0">
    <property type="entry name" value="ACIREDUCTONE DIOXYGENASE"/>
    <property type="match status" value="1"/>
</dbReference>
<dbReference type="Pfam" id="PF03079">
    <property type="entry name" value="ARD"/>
    <property type="match status" value="1"/>
</dbReference>
<dbReference type="SUPFAM" id="SSF51182">
    <property type="entry name" value="RmlC-like cupins"/>
    <property type="match status" value="1"/>
</dbReference>
<sequence>MATILIHNEENTLLESEQEVAAYLENQGVIYEHWDIAKLPNRLSEKYDLTDEEKDEILTVFQKEIESISEKRGYKSQDVISLSDATPNLDDLLQNFQREHHHTDDEVRFIVSGHGIFAIQGKDGVFFDVRLNPGDLISVPPHIRHYFTLQEDRKVVSVRIFVTTEGWVPIYEEETV</sequence>
<name>MTND_BACP2</name>
<evidence type="ECO:0000255" key="1">
    <source>
        <dbReference type="HAMAP-Rule" id="MF_01682"/>
    </source>
</evidence>
<keyword id="KW-0028">Amino-acid biosynthesis</keyword>
<keyword id="KW-0223">Dioxygenase</keyword>
<keyword id="KW-0408">Iron</keyword>
<keyword id="KW-0479">Metal-binding</keyword>
<keyword id="KW-0486">Methionine biosynthesis</keyword>
<keyword id="KW-0533">Nickel</keyword>
<keyword id="KW-0560">Oxidoreductase</keyword>
<protein>
    <recommendedName>
        <fullName evidence="1">Acireductone dioxygenase</fullName>
    </recommendedName>
    <alternativeName>
        <fullName evidence="1">1,2-dihydroxy-3-keto-5-methylthiopentene dioxygenase</fullName>
        <shortName evidence="1">DHK-MTPene dioxygenase</shortName>
    </alternativeName>
    <alternativeName>
        <fullName evidence="1">Acireductone dioxygenase (Fe(2+)-requiring)</fullName>
        <shortName evidence="1">ARD'</shortName>
        <shortName evidence="1">Fe-ARD</shortName>
        <ecNumber evidence="1">1.13.11.54</ecNumber>
    </alternativeName>
    <alternativeName>
        <fullName evidence="1">Acireductone dioxygenase (Ni(2+)-requiring)</fullName>
        <shortName evidence="1">ARD</shortName>
        <shortName evidence="1">Ni-ARD</shortName>
        <ecNumber evidence="1">1.13.11.53</ecNumber>
    </alternativeName>
</protein>
<feature type="chain" id="PRO_0000359178" description="Acireductone dioxygenase">
    <location>
        <begin position="1"/>
        <end position="176"/>
    </location>
</feature>
<feature type="binding site" evidence="1">
    <location>
        <position position="100"/>
    </location>
    <ligand>
        <name>Fe(2+)</name>
        <dbReference type="ChEBI" id="CHEBI:29033"/>
    </ligand>
</feature>
<feature type="binding site" evidence="1">
    <location>
        <position position="100"/>
    </location>
    <ligand>
        <name>Ni(2+)</name>
        <dbReference type="ChEBI" id="CHEBI:49786"/>
    </ligand>
</feature>
<feature type="binding site" evidence="1">
    <location>
        <position position="102"/>
    </location>
    <ligand>
        <name>Fe(2+)</name>
        <dbReference type="ChEBI" id="CHEBI:29033"/>
    </ligand>
</feature>
<feature type="binding site" evidence="1">
    <location>
        <position position="102"/>
    </location>
    <ligand>
        <name>Ni(2+)</name>
        <dbReference type="ChEBI" id="CHEBI:49786"/>
    </ligand>
</feature>
<feature type="binding site" evidence="1">
    <location>
        <position position="106"/>
    </location>
    <ligand>
        <name>Fe(2+)</name>
        <dbReference type="ChEBI" id="CHEBI:29033"/>
    </ligand>
</feature>
<feature type="binding site" evidence="1">
    <location>
        <position position="106"/>
    </location>
    <ligand>
        <name>Ni(2+)</name>
        <dbReference type="ChEBI" id="CHEBI:49786"/>
    </ligand>
</feature>
<feature type="binding site" evidence="1">
    <location>
        <position position="145"/>
    </location>
    <ligand>
        <name>Fe(2+)</name>
        <dbReference type="ChEBI" id="CHEBI:29033"/>
    </ligand>
</feature>
<feature type="binding site" evidence="1">
    <location>
        <position position="145"/>
    </location>
    <ligand>
        <name>Ni(2+)</name>
        <dbReference type="ChEBI" id="CHEBI:49786"/>
    </ligand>
</feature>
<feature type="site" description="May play a role in metal incorporation in vivo" evidence="1">
    <location>
        <position position="99"/>
    </location>
</feature>
<feature type="site" description="May play a role in transmitting local conformational changes" evidence="1">
    <location>
        <position position="105"/>
    </location>
</feature>
<feature type="site" description="Important to generate the dianion" evidence="1">
    <location>
        <position position="108"/>
    </location>
</feature>
<accession>A8FCH1</accession>
<reference key="1">
    <citation type="journal article" date="2007" name="PLoS ONE">
        <title>Paradoxical DNA repair and peroxide resistance gene conservation in Bacillus pumilus SAFR-032.</title>
        <authorList>
            <person name="Gioia J."/>
            <person name="Yerrapragada S."/>
            <person name="Qin X."/>
            <person name="Jiang H."/>
            <person name="Igboeli O.C."/>
            <person name="Muzny D."/>
            <person name="Dugan-Rocha S."/>
            <person name="Ding Y."/>
            <person name="Hawes A."/>
            <person name="Liu W."/>
            <person name="Perez L."/>
            <person name="Kovar C."/>
            <person name="Dinh H."/>
            <person name="Lee S."/>
            <person name="Nazareth L."/>
            <person name="Blyth P."/>
            <person name="Holder M."/>
            <person name="Buhay C."/>
            <person name="Tirumalai M.R."/>
            <person name="Liu Y."/>
            <person name="Dasgupta I."/>
            <person name="Bokhetache L."/>
            <person name="Fujita M."/>
            <person name="Karouia F."/>
            <person name="Eswara Moorthy P."/>
            <person name="Siefert J."/>
            <person name="Uzman A."/>
            <person name="Buzumbo P."/>
            <person name="Verma A."/>
            <person name="Zwiya H."/>
            <person name="McWilliams B.D."/>
            <person name="Olowu A."/>
            <person name="Clinkenbeard K.D."/>
            <person name="Newcombe D."/>
            <person name="Golebiewski L."/>
            <person name="Petrosino J.F."/>
            <person name="Nicholson W.L."/>
            <person name="Fox G.E."/>
            <person name="Venkateswaran K."/>
            <person name="Highlander S.K."/>
            <person name="Weinstock G.M."/>
        </authorList>
    </citation>
    <scope>NUCLEOTIDE SEQUENCE [LARGE SCALE GENOMIC DNA]</scope>
    <source>
        <strain>SAFR-032</strain>
    </source>
</reference>